<dbReference type="EMBL" id="CP000553">
    <property type="protein sequence ID" value="ABM76508.1"/>
    <property type="status" value="ALT_INIT"/>
    <property type="molecule type" value="Genomic_DNA"/>
</dbReference>
<dbReference type="RefSeq" id="WP_011824478.1">
    <property type="nucleotide sequence ID" value="NC_008819.1"/>
</dbReference>
<dbReference type="SMR" id="A2C4U8"/>
<dbReference type="KEGG" id="pme:NATL1_19521"/>
<dbReference type="eggNOG" id="COG0048">
    <property type="taxonomic scope" value="Bacteria"/>
</dbReference>
<dbReference type="HOGENOM" id="CLU_104295_1_2_3"/>
<dbReference type="Proteomes" id="UP000002592">
    <property type="component" value="Chromosome"/>
</dbReference>
<dbReference type="GO" id="GO:0015935">
    <property type="term" value="C:small ribosomal subunit"/>
    <property type="evidence" value="ECO:0007669"/>
    <property type="project" value="InterPro"/>
</dbReference>
<dbReference type="GO" id="GO:0019843">
    <property type="term" value="F:rRNA binding"/>
    <property type="evidence" value="ECO:0007669"/>
    <property type="project" value="UniProtKB-UniRule"/>
</dbReference>
<dbReference type="GO" id="GO:0003735">
    <property type="term" value="F:structural constituent of ribosome"/>
    <property type="evidence" value="ECO:0007669"/>
    <property type="project" value="InterPro"/>
</dbReference>
<dbReference type="GO" id="GO:0000049">
    <property type="term" value="F:tRNA binding"/>
    <property type="evidence" value="ECO:0007669"/>
    <property type="project" value="UniProtKB-UniRule"/>
</dbReference>
<dbReference type="GO" id="GO:0006412">
    <property type="term" value="P:translation"/>
    <property type="evidence" value="ECO:0007669"/>
    <property type="project" value="UniProtKB-UniRule"/>
</dbReference>
<dbReference type="CDD" id="cd03368">
    <property type="entry name" value="Ribosomal_S12"/>
    <property type="match status" value="1"/>
</dbReference>
<dbReference type="FunFam" id="2.40.50.140:FF:000001">
    <property type="entry name" value="30S ribosomal protein S12"/>
    <property type="match status" value="1"/>
</dbReference>
<dbReference type="Gene3D" id="2.40.50.140">
    <property type="entry name" value="Nucleic acid-binding proteins"/>
    <property type="match status" value="1"/>
</dbReference>
<dbReference type="HAMAP" id="MF_00403_B">
    <property type="entry name" value="Ribosomal_uS12_B"/>
    <property type="match status" value="1"/>
</dbReference>
<dbReference type="InterPro" id="IPR012340">
    <property type="entry name" value="NA-bd_OB-fold"/>
</dbReference>
<dbReference type="InterPro" id="IPR006032">
    <property type="entry name" value="Ribosomal_uS12"/>
</dbReference>
<dbReference type="InterPro" id="IPR005679">
    <property type="entry name" value="Ribosomal_uS12_bac"/>
</dbReference>
<dbReference type="NCBIfam" id="TIGR00981">
    <property type="entry name" value="rpsL_bact"/>
    <property type="match status" value="1"/>
</dbReference>
<dbReference type="PANTHER" id="PTHR11652">
    <property type="entry name" value="30S RIBOSOMAL PROTEIN S12 FAMILY MEMBER"/>
    <property type="match status" value="1"/>
</dbReference>
<dbReference type="Pfam" id="PF00164">
    <property type="entry name" value="Ribosom_S12_S23"/>
    <property type="match status" value="1"/>
</dbReference>
<dbReference type="PIRSF" id="PIRSF002133">
    <property type="entry name" value="Ribosomal_S12/S23"/>
    <property type="match status" value="1"/>
</dbReference>
<dbReference type="PRINTS" id="PR01034">
    <property type="entry name" value="RIBOSOMALS12"/>
</dbReference>
<dbReference type="SUPFAM" id="SSF50249">
    <property type="entry name" value="Nucleic acid-binding proteins"/>
    <property type="match status" value="1"/>
</dbReference>
<dbReference type="PROSITE" id="PS00055">
    <property type="entry name" value="RIBOSOMAL_S12"/>
    <property type="match status" value="1"/>
</dbReference>
<gene>
    <name evidence="2" type="primary">rpsL</name>
    <name evidence="2" type="synonym">rps12</name>
    <name type="ordered locus">NATL1_19521</name>
</gene>
<feature type="chain" id="PRO_0000296017" description="Small ribosomal subunit protein uS12">
    <location>
        <begin position="1"/>
        <end position="124"/>
    </location>
</feature>
<feature type="region of interest" description="Disordered" evidence="3">
    <location>
        <begin position="103"/>
        <end position="124"/>
    </location>
</feature>
<feature type="modified residue" description="3-methylthioaspartic acid" evidence="1">
    <location>
        <position position="89"/>
    </location>
</feature>
<comment type="function">
    <text evidence="2">With S4 and S5 plays an important role in translational accuracy.</text>
</comment>
<comment type="function">
    <text evidence="2">Interacts with and stabilizes bases of the 16S rRNA that are involved in tRNA selection in the A site and with the mRNA backbone. Located at the interface of the 30S and 50S subunits, it traverses the body of the 30S subunit contacting proteins on the other side and probably holding the rRNA structure together. The combined cluster of proteins S8, S12 and S17 appears to hold together the shoulder and platform of the 30S subunit.</text>
</comment>
<comment type="subunit">
    <text evidence="2">Part of the 30S ribosomal subunit. Contacts proteins S8 and S17. May interact with IF1 in the 30S initiation complex.</text>
</comment>
<comment type="similarity">
    <text evidence="2">Belongs to the universal ribosomal protein uS12 family.</text>
</comment>
<comment type="sequence caution" evidence="4">
    <conflict type="erroneous initiation">
        <sequence resource="EMBL-CDS" id="ABM76508"/>
    </conflict>
</comment>
<sequence length="124" mass="13824">MPTIQQLIRTERKTLKTKTKSPALRGCPERRGVCTRVYTSTPKKPNSALRKVARVRLTSGFEVTAYIGGIGHNLQEHSVVLLRGGRVKDLPGVRYHIVRGTLDTAGVKDRRQSRSKYGAKSPKE</sequence>
<protein>
    <recommendedName>
        <fullName evidence="2">Small ribosomal subunit protein uS12</fullName>
    </recommendedName>
    <alternativeName>
        <fullName evidence="4">30S ribosomal protein S12</fullName>
    </alternativeName>
</protein>
<accession>A2C4U8</accession>
<keyword id="KW-0488">Methylation</keyword>
<keyword id="KW-0687">Ribonucleoprotein</keyword>
<keyword id="KW-0689">Ribosomal protein</keyword>
<keyword id="KW-0694">RNA-binding</keyword>
<keyword id="KW-0699">rRNA-binding</keyword>
<keyword id="KW-0820">tRNA-binding</keyword>
<evidence type="ECO:0000250" key="1"/>
<evidence type="ECO:0000255" key="2">
    <source>
        <dbReference type="HAMAP-Rule" id="MF_00403"/>
    </source>
</evidence>
<evidence type="ECO:0000256" key="3">
    <source>
        <dbReference type="SAM" id="MobiDB-lite"/>
    </source>
</evidence>
<evidence type="ECO:0000305" key="4"/>
<organism>
    <name type="scientific">Prochlorococcus marinus (strain NATL1A)</name>
    <dbReference type="NCBI Taxonomy" id="167555"/>
    <lineage>
        <taxon>Bacteria</taxon>
        <taxon>Bacillati</taxon>
        <taxon>Cyanobacteriota</taxon>
        <taxon>Cyanophyceae</taxon>
        <taxon>Synechococcales</taxon>
        <taxon>Prochlorococcaceae</taxon>
        <taxon>Prochlorococcus</taxon>
    </lineage>
</organism>
<proteinExistence type="inferred from homology"/>
<name>RS12_PROM1</name>
<reference key="1">
    <citation type="journal article" date="2007" name="PLoS Genet.">
        <title>Patterns and implications of gene gain and loss in the evolution of Prochlorococcus.</title>
        <authorList>
            <person name="Kettler G.C."/>
            <person name="Martiny A.C."/>
            <person name="Huang K."/>
            <person name="Zucker J."/>
            <person name="Coleman M.L."/>
            <person name="Rodrigue S."/>
            <person name="Chen F."/>
            <person name="Lapidus A."/>
            <person name="Ferriera S."/>
            <person name="Johnson J."/>
            <person name="Steglich C."/>
            <person name="Church G.M."/>
            <person name="Richardson P."/>
            <person name="Chisholm S.W."/>
        </authorList>
    </citation>
    <scope>NUCLEOTIDE SEQUENCE [LARGE SCALE GENOMIC DNA]</scope>
    <source>
        <strain>NATL1A</strain>
    </source>
</reference>